<dbReference type="EC" id="1.2.4.2" evidence="1"/>
<dbReference type="EMBL" id="L42023">
    <property type="protein sequence ID" value="AAC23308.1"/>
    <property type="status" value="ALT_INIT"/>
    <property type="molecule type" value="Genomic_DNA"/>
</dbReference>
<dbReference type="PIR" id="E64135">
    <property type="entry name" value="E64135"/>
</dbReference>
<dbReference type="RefSeq" id="NP_439804.2">
    <property type="nucleotide sequence ID" value="NC_000907.1"/>
</dbReference>
<dbReference type="SMR" id="P45303"/>
<dbReference type="STRING" id="71421.HI_1662"/>
<dbReference type="EnsemblBacteria" id="AAC23308">
    <property type="protein sequence ID" value="AAC23308"/>
    <property type="gene ID" value="HI_1662"/>
</dbReference>
<dbReference type="KEGG" id="hin:HI_1662"/>
<dbReference type="PATRIC" id="fig|71421.8.peg.1740"/>
<dbReference type="eggNOG" id="COG0567">
    <property type="taxonomic scope" value="Bacteria"/>
</dbReference>
<dbReference type="HOGENOM" id="CLU_004709_1_0_6"/>
<dbReference type="OrthoDB" id="9759785at2"/>
<dbReference type="PhylomeDB" id="P45303"/>
<dbReference type="BioCyc" id="HINF71421:G1GJ1-1679-MONOMER"/>
<dbReference type="Proteomes" id="UP000000579">
    <property type="component" value="Chromosome"/>
</dbReference>
<dbReference type="GO" id="GO:0005829">
    <property type="term" value="C:cytosol"/>
    <property type="evidence" value="ECO:0000318"/>
    <property type="project" value="GO_Central"/>
</dbReference>
<dbReference type="GO" id="GO:0045252">
    <property type="term" value="C:oxoglutarate dehydrogenase complex"/>
    <property type="evidence" value="ECO:0000318"/>
    <property type="project" value="GO_Central"/>
</dbReference>
<dbReference type="GO" id="GO:0004591">
    <property type="term" value="F:oxoglutarate dehydrogenase (succinyl-transferring) activity"/>
    <property type="evidence" value="ECO:0000318"/>
    <property type="project" value="GO_Central"/>
</dbReference>
<dbReference type="GO" id="GO:0030976">
    <property type="term" value="F:thiamine pyrophosphate binding"/>
    <property type="evidence" value="ECO:0007669"/>
    <property type="project" value="InterPro"/>
</dbReference>
<dbReference type="GO" id="GO:0006096">
    <property type="term" value="P:glycolytic process"/>
    <property type="evidence" value="ECO:0007669"/>
    <property type="project" value="UniProtKB-KW"/>
</dbReference>
<dbReference type="GO" id="GO:0006099">
    <property type="term" value="P:tricarboxylic acid cycle"/>
    <property type="evidence" value="ECO:0000318"/>
    <property type="project" value="GO_Central"/>
</dbReference>
<dbReference type="CDD" id="cd02016">
    <property type="entry name" value="TPP_E1_OGDC_like"/>
    <property type="match status" value="1"/>
</dbReference>
<dbReference type="FunFam" id="1.10.287.1150:FF:000004">
    <property type="entry name" value="2-oxoglutarate dehydrogenase E1 component"/>
    <property type="match status" value="1"/>
</dbReference>
<dbReference type="FunFam" id="3.40.50.11610:FF:000001">
    <property type="entry name" value="2-oxoglutarate dehydrogenase E1 component"/>
    <property type="match status" value="1"/>
</dbReference>
<dbReference type="FunFam" id="3.40.50.12470:FF:000009">
    <property type="entry name" value="2-oxoglutarate dehydrogenase E1 component"/>
    <property type="match status" value="1"/>
</dbReference>
<dbReference type="FunFam" id="3.40.50.970:FF:000014">
    <property type="entry name" value="2-oxoglutarate dehydrogenase E1 component"/>
    <property type="match status" value="1"/>
</dbReference>
<dbReference type="Gene3D" id="3.40.50.12470">
    <property type="match status" value="1"/>
</dbReference>
<dbReference type="Gene3D" id="3.40.50.970">
    <property type="match status" value="1"/>
</dbReference>
<dbReference type="Gene3D" id="3.40.50.11610">
    <property type="entry name" value="Multifunctional 2-oxoglutarate metabolism enzyme, C-terminal domain"/>
    <property type="match status" value="1"/>
</dbReference>
<dbReference type="Gene3D" id="1.10.287.1150">
    <property type="entry name" value="TPP helical domain"/>
    <property type="match status" value="1"/>
</dbReference>
<dbReference type="InterPro" id="IPR032106">
    <property type="entry name" value="2-oxogl_dehyd_N"/>
</dbReference>
<dbReference type="InterPro" id="IPR011603">
    <property type="entry name" value="2oxoglutarate_DH_E1"/>
</dbReference>
<dbReference type="InterPro" id="IPR001017">
    <property type="entry name" value="DH_E1"/>
</dbReference>
<dbReference type="InterPro" id="IPR042179">
    <property type="entry name" value="KGD_C_sf"/>
</dbReference>
<dbReference type="InterPro" id="IPR031717">
    <property type="entry name" value="ODO-1/KGD_C"/>
</dbReference>
<dbReference type="InterPro" id="IPR029061">
    <property type="entry name" value="THDP-binding"/>
</dbReference>
<dbReference type="InterPro" id="IPR005475">
    <property type="entry name" value="Transketolase-like_Pyr-bd"/>
</dbReference>
<dbReference type="NCBIfam" id="TIGR00239">
    <property type="entry name" value="2oxo_dh_E1"/>
    <property type="match status" value="1"/>
</dbReference>
<dbReference type="NCBIfam" id="NF006914">
    <property type="entry name" value="PRK09404.1"/>
    <property type="match status" value="1"/>
</dbReference>
<dbReference type="NCBIfam" id="NF008907">
    <property type="entry name" value="PRK12270.1"/>
    <property type="match status" value="1"/>
</dbReference>
<dbReference type="PANTHER" id="PTHR23152:SF4">
    <property type="entry name" value="2-OXOADIPATE DEHYDROGENASE COMPLEX COMPONENT E1"/>
    <property type="match status" value="1"/>
</dbReference>
<dbReference type="PANTHER" id="PTHR23152">
    <property type="entry name" value="2-OXOGLUTARATE DEHYDROGENASE"/>
    <property type="match status" value="1"/>
</dbReference>
<dbReference type="Pfam" id="PF16078">
    <property type="entry name" value="2-oxogl_dehyd_N"/>
    <property type="match status" value="1"/>
</dbReference>
<dbReference type="Pfam" id="PF00676">
    <property type="entry name" value="E1_dh"/>
    <property type="match status" value="1"/>
</dbReference>
<dbReference type="Pfam" id="PF16870">
    <property type="entry name" value="OxoGdeHyase_C"/>
    <property type="match status" value="1"/>
</dbReference>
<dbReference type="Pfam" id="PF02779">
    <property type="entry name" value="Transket_pyr"/>
    <property type="match status" value="1"/>
</dbReference>
<dbReference type="PIRSF" id="PIRSF000157">
    <property type="entry name" value="Oxoglu_dh_E1"/>
    <property type="match status" value="1"/>
</dbReference>
<dbReference type="SMART" id="SM00861">
    <property type="entry name" value="Transket_pyr"/>
    <property type="match status" value="1"/>
</dbReference>
<dbReference type="SUPFAM" id="SSF52518">
    <property type="entry name" value="Thiamin diphosphate-binding fold (THDP-binding)"/>
    <property type="match status" value="2"/>
</dbReference>
<keyword id="KW-0324">Glycolysis</keyword>
<keyword id="KW-0560">Oxidoreductase</keyword>
<keyword id="KW-1185">Reference proteome</keyword>
<keyword id="KW-0786">Thiamine pyrophosphate</keyword>
<name>ODO1_HAEIN</name>
<reference key="1">
    <citation type="journal article" date="1995" name="Science">
        <title>Whole-genome random sequencing and assembly of Haemophilus influenzae Rd.</title>
        <authorList>
            <person name="Fleischmann R.D."/>
            <person name="Adams M.D."/>
            <person name="White O."/>
            <person name="Clayton R.A."/>
            <person name="Kirkness E.F."/>
            <person name="Kerlavage A.R."/>
            <person name="Bult C.J."/>
            <person name="Tomb J.-F."/>
            <person name="Dougherty B.A."/>
            <person name="Merrick J.M."/>
            <person name="McKenney K."/>
            <person name="Sutton G.G."/>
            <person name="FitzHugh W."/>
            <person name="Fields C.A."/>
            <person name="Gocayne J.D."/>
            <person name="Scott J.D."/>
            <person name="Shirley R."/>
            <person name="Liu L.-I."/>
            <person name="Glodek A."/>
            <person name="Kelley J.M."/>
            <person name="Weidman J.F."/>
            <person name="Phillips C.A."/>
            <person name="Spriggs T."/>
            <person name="Hedblom E."/>
            <person name="Cotton M.D."/>
            <person name="Utterback T.R."/>
            <person name="Hanna M.C."/>
            <person name="Nguyen D.T."/>
            <person name="Saudek D.M."/>
            <person name="Brandon R.C."/>
            <person name="Fine L.D."/>
            <person name="Fritchman J.L."/>
            <person name="Fuhrmann J.L."/>
            <person name="Geoghagen N.S.M."/>
            <person name="Gnehm C.L."/>
            <person name="McDonald L.A."/>
            <person name="Small K.V."/>
            <person name="Fraser C.M."/>
            <person name="Smith H.O."/>
            <person name="Venter J.C."/>
        </authorList>
    </citation>
    <scope>NUCLEOTIDE SEQUENCE [LARGE SCALE GENOMIC DNA]</scope>
    <source>
        <strain>ATCC 51907 / DSM 11121 / KW20 / Rd</strain>
    </source>
</reference>
<feature type="chain" id="PRO_0000162194" description="2-oxoglutarate dehydrogenase E1 component">
    <location>
        <begin position="1"/>
        <end position="935"/>
    </location>
</feature>
<proteinExistence type="inferred from homology"/>
<comment type="function">
    <text evidence="1">E1 component of the 2-oxoglutarate dehydrogenase (OGDH) complex which catalyzes the decarboxylation of 2-oxoglutarate, the first step in the conversion of 2-oxoglutarate to succinyl-CoA and CO(2).</text>
</comment>
<comment type="catalytic activity">
    <reaction evidence="1">
        <text>N(6)-[(R)-lipoyl]-L-lysyl-[protein] + 2-oxoglutarate + H(+) = N(6)-[(R)-S(8)-succinyldihydrolipoyl]-L-lysyl-[protein] + CO2</text>
        <dbReference type="Rhea" id="RHEA:12188"/>
        <dbReference type="Rhea" id="RHEA-COMP:10474"/>
        <dbReference type="Rhea" id="RHEA-COMP:20092"/>
        <dbReference type="ChEBI" id="CHEBI:15378"/>
        <dbReference type="ChEBI" id="CHEBI:16526"/>
        <dbReference type="ChEBI" id="CHEBI:16810"/>
        <dbReference type="ChEBI" id="CHEBI:83099"/>
        <dbReference type="ChEBI" id="CHEBI:83120"/>
        <dbReference type="EC" id="1.2.4.2"/>
    </reaction>
</comment>
<comment type="cofactor">
    <cofactor evidence="1">
        <name>thiamine diphosphate</name>
        <dbReference type="ChEBI" id="CHEBI:58937"/>
    </cofactor>
</comment>
<comment type="subunit">
    <text evidence="1">Homodimer. Part of the 2-oxoglutarate dehydrogenase (OGDH) complex composed of E1 (2-oxoglutarate dehydrogenase), E2 (dihydrolipoamide succinyltransferase) and E3 (dihydrolipoamide dehydrogenase); the complex contains multiple copies of the three enzymatic components (E1, E2 and E3).</text>
</comment>
<comment type="similarity">
    <text evidence="2">Belongs to the alpha-ketoglutarate dehydrogenase family.</text>
</comment>
<comment type="sequence caution" evidence="2">
    <conflict type="erroneous initiation">
        <sequence resource="EMBL-CDS" id="AAC23308"/>
    </conflict>
</comment>
<sequence length="935" mass="106806">MQQNKAFDDWLASTALGGANQSYIEELYESYLSDPQSVEESWRKTFDSLPKTTALEQPHTPVRDYFRRLARENHNEAVTVIDPAAGAKLVKVLQFINAYRFRGHLEANLDPLNYYRWKVSFVPELDYRHHGFTEQDLNETFNINHYVYKRDTIKLGELAQMLKETYCGSIGLEFMHVQDMEQKMWLQSKMESLLDKPLFTSEERVNFLRELTAADGLERYLGAKFPGAKRFSLEGSDAFIPLMKEIIRHSSRQGVNDVVMGMAHRGRLNMLVNVLGKKPENLFDEFAGKHSSERTGDVKYHQGFSSDFAVDDKRVHLTLAFNPSHLEIVSPVVIGSVRSRQTRMNDTEHSKVLAITVHGDSAVAGQGVVQETLNMSNTRGYSVGGTIRIVINNQIGFTTSNPNDTRSTEYCTDIAKMIQAPIIHVNGDDPEAVAFAARMAVEYRNLFKRDIFIDLISYRRHGHNEADEPLATQPMMYSIIKKHPTPRKVYADRLVSEGVMTEEQVTEMANDYRDALDNGDRVVSEWREMDTAKMDWLQYLNYDWTAPYESKFSQERFLTLAKRVCEYPESLRAHPRVEKIYNDRKAMYQGEKLLDWGMAETMAYATLLDEGVNVRLSGEDAGRGTFFHRHAVVHNQNDGTGYVPLTHLHANQGRFEVWDSVLSEESVLAFEYGYATTDPKTLTIWEAQFGDFANGAQIVIDQFISSGEQKWGRMCGLVMLLPHGYEGQGPEHSSARLERYLQLCAEQNMQVCVPSTPAQVYHMLRRQSLRKMRRPLIAISPKSLLRHPLAVSSLDELINGTFQTVIGEIDELDPKDVKRVVMCSGKVYYDLLEQRRANNQKDVAIIRIEQLYPFPHEDVKKALEPYAHVTDYVWCQEEPLNQGAWYCSKHNFESAIPESVKLKYAGRPASASPAVGYMSLHTKQQKQLVEDALSF</sequence>
<protein>
    <recommendedName>
        <fullName>2-oxoglutarate dehydrogenase E1 component</fullName>
        <ecNumber evidence="1">1.2.4.2</ecNumber>
    </recommendedName>
    <alternativeName>
        <fullName>Alpha-ketoglutarate dehydrogenase</fullName>
    </alternativeName>
</protein>
<organism>
    <name type="scientific">Haemophilus influenzae (strain ATCC 51907 / DSM 11121 / KW20 / Rd)</name>
    <dbReference type="NCBI Taxonomy" id="71421"/>
    <lineage>
        <taxon>Bacteria</taxon>
        <taxon>Pseudomonadati</taxon>
        <taxon>Pseudomonadota</taxon>
        <taxon>Gammaproteobacteria</taxon>
        <taxon>Pasteurellales</taxon>
        <taxon>Pasteurellaceae</taxon>
        <taxon>Haemophilus</taxon>
    </lineage>
</organism>
<evidence type="ECO:0000250" key="1">
    <source>
        <dbReference type="UniProtKB" id="P0AFG3"/>
    </source>
</evidence>
<evidence type="ECO:0000305" key="2"/>
<gene>
    <name type="primary">sucA</name>
    <name type="ordered locus">HI_1662</name>
</gene>
<accession>P45303</accession>